<evidence type="ECO:0000255" key="1">
    <source>
        <dbReference type="HAMAP-Rule" id="MF_01810"/>
    </source>
</evidence>
<evidence type="ECO:0000256" key="2">
    <source>
        <dbReference type="SAM" id="MobiDB-lite"/>
    </source>
</evidence>
<organism>
    <name type="scientific">Ralstonia nicotianae (strain ATCC BAA-1114 / GMI1000)</name>
    <name type="common">Ralstonia solanacearum</name>
    <dbReference type="NCBI Taxonomy" id="267608"/>
    <lineage>
        <taxon>Bacteria</taxon>
        <taxon>Pseudomonadati</taxon>
        <taxon>Pseudomonadota</taxon>
        <taxon>Betaproteobacteria</taxon>
        <taxon>Burkholderiales</taxon>
        <taxon>Burkholderiaceae</taxon>
        <taxon>Ralstonia</taxon>
        <taxon>Ralstonia solanacearum species complex</taxon>
    </lineage>
</organism>
<sequence>MDIKRTILWVIFSLSVVLLFDNWQRANGHQSMFFPTPQTVTTTAAAPGGTPAGDVPKAAAPAAAGSQAAPATGAVSQTPASEKIVVTTDVIRATVDTAGAIVTKLELLTQKDHDGNPMVLFDRSLERTYLARSGLIGGDFPNHTTVFTASAGPRDLGTGGEVSLTLTADKGGAKLAKTYVFKRGSYVIDTRFDVTNDGAAPINPTLYMELARDGGAVEQSRFYSTFTGPAVYTDTDHYHKITFADIDKSKAHVPAPTDSGWVAMVQHYFASAWIPAASAKREFYVDRIDTNFYRVGMQQALGTVAPGASVSATARLFAGPQEERMLEGITPGLELVKDYGWLTIIAKPLFWLLEKIHKLLGNWGWSIVALTVLVKLVFFPLSATSYRSMAKMKDLQPRMTAIRERHKGDPQKMNQEMMTLYRTEKVNPLGGCLPIVIQIPVFIALYWVLLSSVEMRGAPWLGWVHDLASPDPFYILPILMAVSMFVQTRLNPTPPDPVQAKMMMFMPIAFSVMFFFFPAGLVLYWVVNNCLSIAQQWSINRMLGTNKKAAAAK</sequence>
<comment type="function">
    <text evidence="1">Required for the insertion and/or proper folding and/or complex formation of integral membrane proteins into the membrane. Involved in integration of membrane proteins that insert both dependently and independently of the Sec translocase complex, as well as at least some lipoproteins. Aids folding of multispanning membrane proteins.</text>
</comment>
<comment type="subunit">
    <text evidence="1">Interacts with the Sec translocase complex via SecD. Specifically interacts with transmembrane segments of nascent integral membrane proteins during membrane integration.</text>
</comment>
<comment type="subcellular location">
    <subcellularLocation>
        <location evidence="1">Cell inner membrane</location>
        <topology evidence="1">Multi-pass membrane protein</topology>
    </subcellularLocation>
</comment>
<comment type="similarity">
    <text evidence="1">Belongs to the OXA1/ALB3/YidC family. Type 1 subfamily.</text>
</comment>
<keyword id="KW-0997">Cell inner membrane</keyword>
<keyword id="KW-1003">Cell membrane</keyword>
<keyword id="KW-0143">Chaperone</keyword>
<keyword id="KW-0472">Membrane</keyword>
<keyword id="KW-0653">Protein transport</keyword>
<keyword id="KW-1185">Reference proteome</keyword>
<keyword id="KW-0812">Transmembrane</keyword>
<keyword id="KW-1133">Transmembrane helix</keyword>
<keyword id="KW-0813">Transport</keyword>
<accession>Q8Y3H6</accession>
<dbReference type="EMBL" id="AL646052">
    <property type="protein sequence ID" value="CAD13532.1"/>
    <property type="molecule type" value="Genomic_DNA"/>
</dbReference>
<dbReference type="RefSeq" id="WP_010999972.1">
    <property type="nucleotide sequence ID" value="NC_003295.1"/>
</dbReference>
<dbReference type="SMR" id="Q8Y3H6"/>
<dbReference type="STRING" id="267608.RSc0004"/>
<dbReference type="EnsemblBacteria" id="CAD13532">
    <property type="protein sequence ID" value="CAD13532"/>
    <property type="gene ID" value="RSc0004"/>
</dbReference>
<dbReference type="KEGG" id="rso:RSc0004"/>
<dbReference type="PATRIC" id="fig|267608.8.peg.4"/>
<dbReference type="eggNOG" id="COG0706">
    <property type="taxonomic scope" value="Bacteria"/>
</dbReference>
<dbReference type="HOGENOM" id="CLU_016535_3_0_4"/>
<dbReference type="Proteomes" id="UP000001436">
    <property type="component" value="Chromosome"/>
</dbReference>
<dbReference type="GO" id="GO:0005886">
    <property type="term" value="C:plasma membrane"/>
    <property type="evidence" value="ECO:0007669"/>
    <property type="project" value="UniProtKB-SubCell"/>
</dbReference>
<dbReference type="GO" id="GO:0032977">
    <property type="term" value="F:membrane insertase activity"/>
    <property type="evidence" value="ECO:0007669"/>
    <property type="project" value="InterPro"/>
</dbReference>
<dbReference type="GO" id="GO:0051205">
    <property type="term" value="P:protein insertion into membrane"/>
    <property type="evidence" value="ECO:0007669"/>
    <property type="project" value="TreeGrafter"/>
</dbReference>
<dbReference type="GO" id="GO:0015031">
    <property type="term" value="P:protein transport"/>
    <property type="evidence" value="ECO:0007669"/>
    <property type="project" value="UniProtKB-KW"/>
</dbReference>
<dbReference type="CDD" id="cd20070">
    <property type="entry name" value="5TM_YidC_Alb3"/>
    <property type="match status" value="1"/>
</dbReference>
<dbReference type="CDD" id="cd19961">
    <property type="entry name" value="EcYidC-like_peri"/>
    <property type="match status" value="1"/>
</dbReference>
<dbReference type="Gene3D" id="2.70.98.90">
    <property type="match status" value="1"/>
</dbReference>
<dbReference type="HAMAP" id="MF_01810">
    <property type="entry name" value="YidC_type1"/>
    <property type="match status" value="1"/>
</dbReference>
<dbReference type="InterPro" id="IPR019998">
    <property type="entry name" value="Membr_insert_YidC"/>
</dbReference>
<dbReference type="InterPro" id="IPR028053">
    <property type="entry name" value="Membr_insert_YidC_N"/>
</dbReference>
<dbReference type="InterPro" id="IPR001708">
    <property type="entry name" value="YidC/ALB3/OXA1/COX18"/>
</dbReference>
<dbReference type="InterPro" id="IPR028055">
    <property type="entry name" value="YidC/Oxa/ALB_C"/>
</dbReference>
<dbReference type="InterPro" id="IPR047196">
    <property type="entry name" value="YidC_ALB_C"/>
</dbReference>
<dbReference type="InterPro" id="IPR038221">
    <property type="entry name" value="YidC_periplasmic_sf"/>
</dbReference>
<dbReference type="NCBIfam" id="NF002352">
    <property type="entry name" value="PRK01318.1-3"/>
    <property type="match status" value="1"/>
</dbReference>
<dbReference type="NCBIfam" id="NF002353">
    <property type="entry name" value="PRK01318.1-4"/>
    <property type="match status" value="1"/>
</dbReference>
<dbReference type="NCBIfam" id="TIGR03593">
    <property type="entry name" value="yidC_nterm"/>
    <property type="match status" value="1"/>
</dbReference>
<dbReference type="NCBIfam" id="TIGR03592">
    <property type="entry name" value="yidC_oxa1_cterm"/>
    <property type="match status" value="1"/>
</dbReference>
<dbReference type="PANTHER" id="PTHR12428:SF65">
    <property type="entry name" value="CYTOCHROME C OXIDASE ASSEMBLY PROTEIN COX18, MITOCHONDRIAL"/>
    <property type="match status" value="1"/>
</dbReference>
<dbReference type="PANTHER" id="PTHR12428">
    <property type="entry name" value="OXA1"/>
    <property type="match status" value="1"/>
</dbReference>
<dbReference type="Pfam" id="PF02096">
    <property type="entry name" value="60KD_IMP"/>
    <property type="match status" value="1"/>
</dbReference>
<dbReference type="Pfam" id="PF14849">
    <property type="entry name" value="YidC_periplas"/>
    <property type="match status" value="1"/>
</dbReference>
<dbReference type="PRINTS" id="PR00701">
    <property type="entry name" value="60KDINNERMP"/>
</dbReference>
<dbReference type="PRINTS" id="PR01900">
    <property type="entry name" value="YIDCPROTEIN"/>
</dbReference>
<reference key="1">
    <citation type="journal article" date="2002" name="Nature">
        <title>Genome sequence of the plant pathogen Ralstonia solanacearum.</title>
        <authorList>
            <person name="Salanoubat M."/>
            <person name="Genin S."/>
            <person name="Artiguenave F."/>
            <person name="Gouzy J."/>
            <person name="Mangenot S."/>
            <person name="Arlat M."/>
            <person name="Billault A."/>
            <person name="Brottier P."/>
            <person name="Camus J.-C."/>
            <person name="Cattolico L."/>
            <person name="Chandler M."/>
            <person name="Choisne N."/>
            <person name="Claudel-Renard C."/>
            <person name="Cunnac S."/>
            <person name="Demange N."/>
            <person name="Gaspin C."/>
            <person name="Lavie M."/>
            <person name="Moisan A."/>
            <person name="Robert C."/>
            <person name="Saurin W."/>
            <person name="Schiex T."/>
            <person name="Siguier P."/>
            <person name="Thebault P."/>
            <person name="Whalen M."/>
            <person name="Wincker P."/>
            <person name="Levy M."/>
            <person name="Weissenbach J."/>
            <person name="Boucher C.A."/>
        </authorList>
    </citation>
    <scope>NUCLEOTIDE SEQUENCE [LARGE SCALE GENOMIC DNA]</scope>
    <source>
        <strain>ATCC BAA-1114 / GMI1000</strain>
    </source>
</reference>
<feature type="chain" id="PRO_0000124745" description="Membrane protein insertase YidC">
    <location>
        <begin position="1"/>
        <end position="553"/>
    </location>
</feature>
<feature type="transmembrane region" description="Helical" evidence="1">
    <location>
        <begin position="3"/>
        <end position="23"/>
    </location>
</feature>
<feature type="transmembrane region" description="Helical" evidence="1">
    <location>
        <begin position="359"/>
        <end position="379"/>
    </location>
</feature>
<feature type="transmembrane region" description="Helical" evidence="1">
    <location>
        <begin position="429"/>
        <end position="449"/>
    </location>
</feature>
<feature type="transmembrane region" description="Helical" evidence="1">
    <location>
        <begin position="467"/>
        <end position="487"/>
    </location>
</feature>
<feature type="transmembrane region" description="Helical" evidence="1">
    <location>
        <begin position="507"/>
        <end position="527"/>
    </location>
</feature>
<feature type="region of interest" description="Disordered" evidence="2">
    <location>
        <begin position="44"/>
        <end position="64"/>
    </location>
</feature>
<proteinExistence type="inferred from homology"/>
<name>YIDC_RALN1</name>
<gene>
    <name evidence="1" type="primary">yidC</name>
    <name type="ordered locus">RSc0004</name>
    <name type="ORF">RS01826</name>
</gene>
<protein>
    <recommendedName>
        <fullName evidence="1">Membrane protein insertase YidC</fullName>
    </recommendedName>
    <alternativeName>
        <fullName evidence="1">Foldase YidC</fullName>
    </alternativeName>
    <alternativeName>
        <fullName evidence="1">Membrane integrase YidC</fullName>
    </alternativeName>
    <alternativeName>
        <fullName evidence="1">Membrane protein YidC</fullName>
    </alternativeName>
</protein>